<dbReference type="EC" id="2.7.4.8"/>
<dbReference type="EMBL" id="AL157959">
    <property type="protein sequence ID" value="CAM09034.1"/>
    <property type="molecule type" value="Genomic_DNA"/>
</dbReference>
<dbReference type="PIR" id="G81819">
    <property type="entry name" value="G81819"/>
</dbReference>
<dbReference type="RefSeq" id="WP_002241856.1">
    <property type="nucleotide sequence ID" value="NC_003116.1"/>
</dbReference>
<dbReference type="SMR" id="Q9JT96"/>
<dbReference type="EnsemblBacteria" id="CAM09034">
    <property type="protein sequence ID" value="CAM09034"/>
    <property type="gene ID" value="NMA1919"/>
</dbReference>
<dbReference type="KEGG" id="nma:NMA1919"/>
<dbReference type="HOGENOM" id="CLU_001715_1_2_4"/>
<dbReference type="Proteomes" id="UP000000626">
    <property type="component" value="Chromosome"/>
</dbReference>
<dbReference type="GO" id="GO:0005829">
    <property type="term" value="C:cytosol"/>
    <property type="evidence" value="ECO:0007669"/>
    <property type="project" value="TreeGrafter"/>
</dbReference>
<dbReference type="GO" id="GO:0005524">
    <property type="term" value="F:ATP binding"/>
    <property type="evidence" value="ECO:0007669"/>
    <property type="project" value="UniProtKB-UniRule"/>
</dbReference>
<dbReference type="GO" id="GO:0004385">
    <property type="term" value="F:guanylate kinase activity"/>
    <property type="evidence" value="ECO:0007669"/>
    <property type="project" value="UniProtKB-UniRule"/>
</dbReference>
<dbReference type="CDD" id="cd00071">
    <property type="entry name" value="GMPK"/>
    <property type="match status" value="1"/>
</dbReference>
<dbReference type="FunFam" id="3.30.63.10:FF:000002">
    <property type="entry name" value="Guanylate kinase 1"/>
    <property type="match status" value="1"/>
</dbReference>
<dbReference type="Gene3D" id="3.30.63.10">
    <property type="entry name" value="Guanylate Kinase phosphate binding domain"/>
    <property type="match status" value="1"/>
</dbReference>
<dbReference type="Gene3D" id="3.40.50.300">
    <property type="entry name" value="P-loop containing nucleotide triphosphate hydrolases"/>
    <property type="match status" value="1"/>
</dbReference>
<dbReference type="HAMAP" id="MF_00328">
    <property type="entry name" value="Guanylate_kinase"/>
    <property type="match status" value="1"/>
</dbReference>
<dbReference type="InterPro" id="IPR008145">
    <property type="entry name" value="GK/Ca_channel_bsu"/>
</dbReference>
<dbReference type="InterPro" id="IPR008144">
    <property type="entry name" value="Guanylate_kin-like_dom"/>
</dbReference>
<dbReference type="InterPro" id="IPR017665">
    <property type="entry name" value="Guanylate_kinase"/>
</dbReference>
<dbReference type="InterPro" id="IPR020590">
    <property type="entry name" value="Guanylate_kinase_CS"/>
</dbReference>
<dbReference type="InterPro" id="IPR027417">
    <property type="entry name" value="P-loop_NTPase"/>
</dbReference>
<dbReference type="NCBIfam" id="TIGR03263">
    <property type="entry name" value="guanyl_kin"/>
    <property type="match status" value="1"/>
</dbReference>
<dbReference type="PANTHER" id="PTHR23117:SF13">
    <property type="entry name" value="GUANYLATE KINASE"/>
    <property type="match status" value="1"/>
</dbReference>
<dbReference type="PANTHER" id="PTHR23117">
    <property type="entry name" value="GUANYLATE KINASE-RELATED"/>
    <property type="match status" value="1"/>
</dbReference>
<dbReference type="Pfam" id="PF00625">
    <property type="entry name" value="Guanylate_kin"/>
    <property type="match status" value="1"/>
</dbReference>
<dbReference type="SMART" id="SM00072">
    <property type="entry name" value="GuKc"/>
    <property type="match status" value="1"/>
</dbReference>
<dbReference type="SUPFAM" id="SSF52540">
    <property type="entry name" value="P-loop containing nucleoside triphosphate hydrolases"/>
    <property type="match status" value="1"/>
</dbReference>
<dbReference type="PROSITE" id="PS00856">
    <property type="entry name" value="GUANYLATE_KINASE_1"/>
    <property type="match status" value="1"/>
</dbReference>
<dbReference type="PROSITE" id="PS50052">
    <property type="entry name" value="GUANYLATE_KINASE_2"/>
    <property type="match status" value="1"/>
</dbReference>
<accession>Q9JT96</accession>
<accession>A1ITC1</accession>
<reference key="1">
    <citation type="journal article" date="2000" name="Nature">
        <title>Complete DNA sequence of a serogroup A strain of Neisseria meningitidis Z2491.</title>
        <authorList>
            <person name="Parkhill J."/>
            <person name="Achtman M."/>
            <person name="James K.D."/>
            <person name="Bentley S.D."/>
            <person name="Churcher C.M."/>
            <person name="Klee S.R."/>
            <person name="Morelli G."/>
            <person name="Basham D."/>
            <person name="Brown D."/>
            <person name="Chillingworth T."/>
            <person name="Davies R.M."/>
            <person name="Davis P."/>
            <person name="Devlin K."/>
            <person name="Feltwell T."/>
            <person name="Hamlin N."/>
            <person name="Holroyd S."/>
            <person name="Jagels K."/>
            <person name="Leather S."/>
            <person name="Moule S."/>
            <person name="Mungall K.L."/>
            <person name="Quail M.A."/>
            <person name="Rajandream M.A."/>
            <person name="Rutherford K.M."/>
            <person name="Simmonds M."/>
            <person name="Skelton J."/>
            <person name="Whitehead S."/>
            <person name="Spratt B.G."/>
            <person name="Barrell B.G."/>
        </authorList>
    </citation>
    <scope>NUCLEOTIDE SEQUENCE [LARGE SCALE GENOMIC DNA]</scope>
    <source>
        <strain>DSM 15465 / Z2491</strain>
    </source>
</reference>
<evidence type="ECO:0000250" key="1"/>
<evidence type="ECO:0000305" key="2"/>
<proteinExistence type="inferred from homology"/>
<sequence length="205" mass="22530">MSAYRKGNIFIISAASGTGKTTLVSRLLANHNGLRVSVSHTTRPPREGEANGVHYHFVSKEEFESLIAQEAFLEYADVFGNYYGTSAEGVNALAAAGYDVILEIDVQGAAQVRDALPEAVGIFILPPSFDVLAARLNGRGTDSREVIQRRLSKARHEIEQSVLFDFVVVNDDLARAEEDLRHIVNACRLKRSRQLGFIADLLENS</sequence>
<gene>
    <name type="primary">gmk</name>
    <name type="ordered locus">NMA1919</name>
</gene>
<organism>
    <name type="scientific">Neisseria meningitidis serogroup A / serotype 4A (strain DSM 15465 / Z2491)</name>
    <dbReference type="NCBI Taxonomy" id="122587"/>
    <lineage>
        <taxon>Bacteria</taxon>
        <taxon>Pseudomonadati</taxon>
        <taxon>Pseudomonadota</taxon>
        <taxon>Betaproteobacteria</taxon>
        <taxon>Neisseriales</taxon>
        <taxon>Neisseriaceae</taxon>
        <taxon>Neisseria</taxon>
    </lineage>
</organism>
<feature type="chain" id="PRO_0000170572" description="Guanylate kinase">
    <location>
        <begin position="1"/>
        <end position="205"/>
    </location>
</feature>
<feature type="domain" description="Guanylate kinase-like">
    <location>
        <begin position="7"/>
        <end position="185"/>
    </location>
</feature>
<feature type="binding site" evidence="1">
    <location>
        <begin position="14"/>
        <end position="21"/>
    </location>
    <ligand>
        <name>ATP</name>
        <dbReference type="ChEBI" id="CHEBI:30616"/>
    </ligand>
</feature>
<keyword id="KW-0067">ATP-binding</keyword>
<keyword id="KW-0963">Cytoplasm</keyword>
<keyword id="KW-0418">Kinase</keyword>
<keyword id="KW-0547">Nucleotide-binding</keyword>
<keyword id="KW-0808">Transferase</keyword>
<protein>
    <recommendedName>
        <fullName>Guanylate kinase</fullName>
        <ecNumber>2.7.4.8</ecNumber>
    </recommendedName>
    <alternativeName>
        <fullName>GMP kinase</fullName>
    </alternativeName>
</protein>
<name>KGUA_NEIMA</name>
<comment type="function">
    <text evidence="1">Essential for recycling GMP and indirectly, cGMP.</text>
</comment>
<comment type="catalytic activity">
    <reaction>
        <text>GMP + ATP = GDP + ADP</text>
        <dbReference type="Rhea" id="RHEA:20780"/>
        <dbReference type="ChEBI" id="CHEBI:30616"/>
        <dbReference type="ChEBI" id="CHEBI:58115"/>
        <dbReference type="ChEBI" id="CHEBI:58189"/>
        <dbReference type="ChEBI" id="CHEBI:456216"/>
        <dbReference type="EC" id="2.7.4.8"/>
    </reaction>
</comment>
<comment type="subcellular location">
    <subcellularLocation>
        <location evidence="1">Cytoplasm</location>
    </subcellularLocation>
</comment>
<comment type="similarity">
    <text evidence="2">Belongs to the guanylate kinase family.</text>
</comment>